<evidence type="ECO:0000250" key="1"/>
<evidence type="ECO:0000255" key="2">
    <source>
        <dbReference type="PROSITE-ProRule" id="PRU00146"/>
    </source>
</evidence>
<evidence type="ECO:0000256" key="3">
    <source>
        <dbReference type="SAM" id="MobiDB-lite"/>
    </source>
</evidence>
<evidence type="ECO:0000305" key="4"/>
<gene>
    <name type="ORF">OsI_18576</name>
</gene>
<organism>
    <name type="scientific">Oryza sativa subsp. indica</name>
    <name type="common">Rice</name>
    <dbReference type="NCBI Taxonomy" id="39946"/>
    <lineage>
        <taxon>Eukaryota</taxon>
        <taxon>Viridiplantae</taxon>
        <taxon>Streptophyta</taxon>
        <taxon>Embryophyta</taxon>
        <taxon>Tracheophyta</taxon>
        <taxon>Spermatophyta</taxon>
        <taxon>Magnoliopsida</taxon>
        <taxon>Liliopsida</taxon>
        <taxon>Poales</taxon>
        <taxon>Poaceae</taxon>
        <taxon>BOP clade</taxon>
        <taxon>Oryzoideae</taxon>
        <taxon>Oryzeae</taxon>
        <taxon>Oryzinae</taxon>
        <taxon>Oryza</taxon>
        <taxon>Oryza sativa</taxon>
    </lineage>
</organism>
<feature type="chain" id="PRO_0000412936" description="PHD finger protein ALFIN-LIKE 1">
    <location>
        <begin position="1"/>
        <end position="258"/>
    </location>
</feature>
<feature type="zinc finger region" description="PHD-type" evidence="2">
    <location>
        <begin position="202"/>
        <end position="254"/>
    </location>
</feature>
<feature type="region of interest" description="Disordered" evidence="3">
    <location>
        <begin position="1"/>
        <end position="24"/>
    </location>
</feature>
<feature type="region of interest" description="Disordered" evidence="3">
    <location>
        <begin position="150"/>
        <end position="200"/>
    </location>
</feature>
<feature type="compositionally biased region" description="Basic and acidic residues" evidence="3">
    <location>
        <begin position="1"/>
        <end position="10"/>
    </location>
</feature>
<feature type="compositionally biased region" description="Gly residues" evidence="3">
    <location>
        <begin position="11"/>
        <end position="21"/>
    </location>
</feature>
<feature type="compositionally biased region" description="Basic and acidic residues" evidence="3">
    <location>
        <begin position="175"/>
        <end position="187"/>
    </location>
</feature>
<feature type="compositionally biased region" description="Acidic residues" evidence="3">
    <location>
        <begin position="188"/>
        <end position="199"/>
    </location>
</feature>
<feature type="site" description="Histone H3K4me3 binding" evidence="1">
    <location>
        <position position="212"/>
    </location>
</feature>
<feature type="site" description="Histone H3K4me3 binding" evidence="1">
    <location>
        <position position="218"/>
    </location>
</feature>
<feature type="site" description="Histone H3K4me3 binding" evidence="1">
    <location>
        <position position="222"/>
    </location>
</feature>
<feature type="site" description="Histone H3K4me3 binding" evidence="1">
    <location>
        <position position="227"/>
    </location>
</feature>
<protein>
    <recommendedName>
        <fullName>PHD finger protein ALFIN-LIKE 1</fullName>
    </recommendedName>
</protein>
<keyword id="KW-0156">Chromatin regulator</keyword>
<keyword id="KW-0479">Metal-binding</keyword>
<keyword id="KW-0539">Nucleus</keyword>
<keyword id="KW-1185">Reference proteome</keyword>
<keyword id="KW-0804">Transcription</keyword>
<keyword id="KW-0805">Transcription regulation</keyword>
<keyword id="KW-0862">Zinc</keyword>
<keyword id="KW-0863">Zinc-finger</keyword>
<accession>A2Y0Q2</accession>
<reference key="1">
    <citation type="journal article" date="2005" name="PLoS Biol.">
        <title>The genomes of Oryza sativa: a history of duplications.</title>
        <authorList>
            <person name="Yu J."/>
            <person name="Wang J."/>
            <person name="Lin W."/>
            <person name="Li S."/>
            <person name="Li H."/>
            <person name="Zhou J."/>
            <person name="Ni P."/>
            <person name="Dong W."/>
            <person name="Hu S."/>
            <person name="Zeng C."/>
            <person name="Zhang J."/>
            <person name="Zhang Y."/>
            <person name="Li R."/>
            <person name="Xu Z."/>
            <person name="Li S."/>
            <person name="Li X."/>
            <person name="Zheng H."/>
            <person name="Cong L."/>
            <person name="Lin L."/>
            <person name="Yin J."/>
            <person name="Geng J."/>
            <person name="Li G."/>
            <person name="Shi J."/>
            <person name="Liu J."/>
            <person name="Lv H."/>
            <person name="Li J."/>
            <person name="Wang J."/>
            <person name="Deng Y."/>
            <person name="Ran L."/>
            <person name="Shi X."/>
            <person name="Wang X."/>
            <person name="Wu Q."/>
            <person name="Li C."/>
            <person name="Ren X."/>
            <person name="Wang J."/>
            <person name="Wang X."/>
            <person name="Li D."/>
            <person name="Liu D."/>
            <person name="Zhang X."/>
            <person name="Ji Z."/>
            <person name="Zhao W."/>
            <person name="Sun Y."/>
            <person name="Zhang Z."/>
            <person name="Bao J."/>
            <person name="Han Y."/>
            <person name="Dong L."/>
            <person name="Ji J."/>
            <person name="Chen P."/>
            <person name="Wu S."/>
            <person name="Liu J."/>
            <person name="Xiao Y."/>
            <person name="Bu D."/>
            <person name="Tan J."/>
            <person name="Yang L."/>
            <person name="Ye C."/>
            <person name="Zhang J."/>
            <person name="Xu J."/>
            <person name="Zhou Y."/>
            <person name="Yu Y."/>
            <person name="Zhang B."/>
            <person name="Zhuang S."/>
            <person name="Wei H."/>
            <person name="Liu B."/>
            <person name="Lei M."/>
            <person name="Yu H."/>
            <person name="Li Y."/>
            <person name="Xu H."/>
            <person name="Wei S."/>
            <person name="He X."/>
            <person name="Fang L."/>
            <person name="Zhang Z."/>
            <person name="Zhang Y."/>
            <person name="Huang X."/>
            <person name="Su Z."/>
            <person name="Tong W."/>
            <person name="Li J."/>
            <person name="Tong Z."/>
            <person name="Li S."/>
            <person name="Ye J."/>
            <person name="Wang L."/>
            <person name="Fang L."/>
            <person name="Lei T."/>
            <person name="Chen C.-S."/>
            <person name="Chen H.-C."/>
            <person name="Xu Z."/>
            <person name="Li H."/>
            <person name="Huang H."/>
            <person name="Zhang F."/>
            <person name="Xu H."/>
            <person name="Li N."/>
            <person name="Zhao C."/>
            <person name="Li S."/>
            <person name="Dong L."/>
            <person name="Huang Y."/>
            <person name="Li L."/>
            <person name="Xi Y."/>
            <person name="Qi Q."/>
            <person name="Li W."/>
            <person name="Zhang B."/>
            <person name="Hu W."/>
            <person name="Zhang Y."/>
            <person name="Tian X."/>
            <person name="Jiao Y."/>
            <person name="Liang X."/>
            <person name="Jin J."/>
            <person name="Gao L."/>
            <person name="Zheng W."/>
            <person name="Hao B."/>
            <person name="Liu S.-M."/>
            <person name="Wang W."/>
            <person name="Yuan L."/>
            <person name="Cao M."/>
            <person name="McDermott J."/>
            <person name="Samudrala R."/>
            <person name="Wang J."/>
            <person name="Wong G.K.-S."/>
            <person name="Yang H."/>
        </authorList>
    </citation>
    <scope>NUCLEOTIDE SEQUENCE [LARGE SCALE GENOMIC DNA]</scope>
    <source>
        <strain>cv. 93-11</strain>
    </source>
</reference>
<comment type="function">
    <text evidence="1">Histone-binding component that specifically recognizes H3 tails trimethylated on 'Lys-4' (H3K4me3), which mark transcription start sites of virtually all active genes.</text>
</comment>
<comment type="subunit">
    <text evidence="1">Interacts with H3K4me3 and to a lesser extent with H3K4me2.</text>
</comment>
<comment type="subcellular location">
    <subcellularLocation>
        <location evidence="1">Nucleus</location>
    </subcellularLocation>
</comment>
<comment type="domain">
    <text evidence="1">The PHD-type zinc finger mediates the binding to H3K4me3.</text>
</comment>
<comment type="similarity">
    <text evidence="4">Belongs to the Alfin family.</text>
</comment>
<name>ALFL1_ORYSI</name>
<proteinExistence type="inferred from homology"/>
<dbReference type="EMBL" id="CM000130">
    <property type="protein sequence ID" value="EAY96662.1"/>
    <property type="molecule type" value="Genomic_DNA"/>
</dbReference>
<dbReference type="SMR" id="A2Y0Q2"/>
<dbReference type="STRING" id="39946.A2Y0Q2"/>
<dbReference type="EnsemblPlants" id="BGIOSGA018756-TA">
    <property type="protein sequence ID" value="BGIOSGA018756-PA"/>
    <property type="gene ID" value="BGIOSGA018756"/>
</dbReference>
<dbReference type="EnsemblPlants" id="OsGoSa_05g0004500.01">
    <property type="protein sequence ID" value="OsGoSa_05g0004500.01"/>
    <property type="gene ID" value="OsGoSa_05g0004500"/>
</dbReference>
<dbReference type="EnsemblPlants" id="OsIR64_05g0004360.01">
    <property type="protein sequence ID" value="OsIR64_05g0004360.01"/>
    <property type="gene ID" value="OsIR64_05g0004360"/>
</dbReference>
<dbReference type="EnsemblPlants" id="OsKYG_05g0004410.01">
    <property type="protein sequence ID" value="OsKYG_05g0004410.01"/>
    <property type="gene ID" value="OsKYG_05g0004410"/>
</dbReference>
<dbReference type="EnsemblPlants" id="OsLima_05g0004490.01">
    <property type="protein sequence ID" value="OsLima_05g0004490.01"/>
    <property type="gene ID" value="OsLima_05g0004490"/>
</dbReference>
<dbReference type="EnsemblPlants" id="OsLiXu_05g0004520.01">
    <property type="protein sequence ID" value="OsLiXu_05g0004520.01"/>
    <property type="gene ID" value="OsLiXu_05g0004520"/>
</dbReference>
<dbReference type="EnsemblPlants" id="OsMH63_05G004550_01">
    <property type="protein sequence ID" value="OsMH63_05G004550_01"/>
    <property type="gene ID" value="OsMH63_05G004550"/>
</dbReference>
<dbReference type="EnsemblPlants" id="OsPr106_05g0004580.01">
    <property type="protein sequence ID" value="OsPr106_05g0004580.01"/>
    <property type="gene ID" value="OsPr106_05g0004580"/>
</dbReference>
<dbReference type="EnsemblPlants" id="OsZS97_05G004550_02">
    <property type="protein sequence ID" value="OsZS97_05G004550_02"/>
    <property type="gene ID" value="OsZS97_05G004550"/>
</dbReference>
<dbReference type="Gramene" id="BGIOSGA018756-TA">
    <property type="protein sequence ID" value="BGIOSGA018756-PA"/>
    <property type="gene ID" value="BGIOSGA018756"/>
</dbReference>
<dbReference type="Gramene" id="OsGoSa_05g0004500.01">
    <property type="protein sequence ID" value="OsGoSa_05g0004500.01"/>
    <property type="gene ID" value="OsGoSa_05g0004500"/>
</dbReference>
<dbReference type="Gramene" id="OsIR64_05g0004360.01">
    <property type="protein sequence ID" value="OsIR64_05g0004360.01"/>
    <property type="gene ID" value="OsIR64_05g0004360"/>
</dbReference>
<dbReference type="Gramene" id="OsKYG_05g0004410.01">
    <property type="protein sequence ID" value="OsKYG_05g0004410.01"/>
    <property type="gene ID" value="OsKYG_05g0004410"/>
</dbReference>
<dbReference type="Gramene" id="OsLima_05g0004490.01">
    <property type="protein sequence ID" value="OsLima_05g0004490.01"/>
    <property type="gene ID" value="OsLima_05g0004490"/>
</dbReference>
<dbReference type="Gramene" id="OsLiXu_05g0004520.01">
    <property type="protein sequence ID" value="OsLiXu_05g0004520.01"/>
    <property type="gene ID" value="OsLiXu_05g0004520"/>
</dbReference>
<dbReference type="Gramene" id="OsMH63_05G004550_01">
    <property type="protein sequence ID" value="OsMH63_05G004550_01"/>
    <property type="gene ID" value="OsMH63_05G004550"/>
</dbReference>
<dbReference type="Gramene" id="OsPr106_05g0004580.01">
    <property type="protein sequence ID" value="OsPr106_05g0004580.01"/>
    <property type="gene ID" value="OsPr106_05g0004580"/>
</dbReference>
<dbReference type="Gramene" id="OsZS97_05G004550_02">
    <property type="protein sequence ID" value="OsZS97_05G004550_02"/>
    <property type="gene ID" value="OsZS97_05G004550"/>
</dbReference>
<dbReference type="HOGENOM" id="CLU_058315_1_0_1"/>
<dbReference type="OMA" id="RNERYIT"/>
<dbReference type="OrthoDB" id="436852at2759"/>
<dbReference type="Proteomes" id="UP000007015">
    <property type="component" value="Chromosome 5"/>
</dbReference>
<dbReference type="GO" id="GO:0005634">
    <property type="term" value="C:nucleus"/>
    <property type="evidence" value="ECO:0007669"/>
    <property type="project" value="UniProtKB-SubCell"/>
</dbReference>
<dbReference type="GO" id="GO:0042393">
    <property type="term" value="F:histone binding"/>
    <property type="evidence" value="ECO:0007669"/>
    <property type="project" value="InterPro"/>
</dbReference>
<dbReference type="GO" id="GO:0000976">
    <property type="term" value="F:transcription cis-regulatory region binding"/>
    <property type="evidence" value="ECO:0007669"/>
    <property type="project" value="TreeGrafter"/>
</dbReference>
<dbReference type="GO" id="GO:0003712">
    <property type="term" value="F:transcription coregulator activity"/>
    <property type="evidence" value="ECO:0007669"/>
    <property type="project" value="TreeGrafter"/>
</dbReference>
<dbReference type="GO" id="GO:0008270">
    <property type="term" value="F:zinc ion binding"/>
    <property type="evidence" value="ECO:0007669"/>
    <property type="project" value="UniProtKB-KW"/>
</dbReference>
<dbReference type="GO" id="GO:0006325">
    <property type="term" value="P:chromatin organization"/>
    <property type="evidence" value="ECO:0007669"/>
    <property type="project" value="UniProtKB-KW"/>
</dbReference>
<dbReference type="GO" id="GO:0006355">
    <property type="term" value="P:regulation of DNA-templated transcription"/>
    <property type="evidence" value="ECO:0007669"/>
    <property type="project" value="InterPro"/>
</dbReference>
<dbReference type="CDD" id="cd15613">
    <property type="entry name" value="PHD_AL_plant"/>
    <property type="match status" value="1"/>
</dbReference>
<dbReference type="FunFam" id="3.30.40.10:FF:000306">
    <property type="entry name" value="PHD finger alfin-like protein"/>
    <property type="match status" value="1"/>
</dbReference>
<dbReference type="Gene3D" id="3.30.40.10">
    <property type="entry name" value="Zinc/RING finger domain, C3HC4 (zinc finger)"/>
    <property type="match status" value="1"/>
</dbReference>
<dbReference type="InterPro" id="IPR045104">
    <property type="entry name" value="Alfin"/>
</dbReference>
<dbReference type="InterPro" id="IPR021998">
    <property type="entry name" value="Alfin_N"/>
</dbReference>
<dbReference type="InterPro" id="IPR044104">
    <property type="entry name" value="PHD_AL_plant"/>
</dbReference>
<dbReference type="InterPro" id="IPR019786">
    <property type="entry name" value="Zinc_finger_PHD-type_CS"/>
</dbReference>
<dbReference type="InterPro" id="IPR011011">
    <property type="entry name" value="Znf_FYVE_PHD"/>
</dbReference>
<dbReference type="InterPro" id="IPR001965">
    <property type="entry name" value="Znf_PHD"/>
</dbReference>
<dbReference type="InterPro" id="IPR019787">
    <property type="entry name" value="Znf_PHD-finger"/>
</dbReference>
<dbReference type="InterPro" id="IPR013083">
    <property type="entry name" value="Znf_RING/FYVE/PHD"/>
</dbReference>
<dbReference type="PANTHER" id="PTHR12321">
    <property type="entry name" value="CPG BINDING PROTEIN"/>
    <property type="match status" value="1"/>
</dbReference>
<dbReference type="PANTHER" id="PTHR12321:SF181">
    <property type="entry name" value="PHD FINGER PROTEIN ALFIN-LIKE 1"/>
    <property type="match status" value="1"/>
</dbReference>
<dbReference type="Pfam" id="PF12165">
    <property type="entry name" value="Alfin"/>
    <property type="match status" value="1"/>
</dbReference>
<dbReference type="Pfam" id="PF00628">
    <property type="entry name" value="PHD"/>
    <property type="match status" value="1"/>
</dbReference>
<dbReference type="SMART" id="SM00249">
    <property type="entry name" value="PHD"/>
    <property type="match status" value="1"/>
</dbReference>
<dbReference type="SUPFAM" id="SSF57903">
    <property type="entry name" value="FYVE/PHD zinc finger"/>
    <property type="match status" value="1"/>
</dbReference>
<dbReference type="PROSITE" id="PS01359">
    <property type="entry name" value="ZF_PHD_1"/>
    <property type="match status" value="1"/>
</dbReference>
<dbReference type="PROSITE" id="PS50016">
    <property type="entry name" value="ZF_PHD_2"/>
    <property type="match status" value="1"/>
</dbReference>
<sequence>MDASYRRDGRGGGGGGGGGGSAPRSVEDIFKDFRARRTAILRALTHDVEDFYAQCDPEKENLCLYGYANEAWQVALPAEEVPTELPEPALGINFARDGMNRRDWLALVAVHSDSWLVSVAFYYAARLNRNDRKRLFGMMNDLPTVYEVVSGSRQSKERDRSGMDNSSRNKISSKHTSDVARVENNIKEEDEGYDEDDGDHSETLCGTCGGIYSADEFWIGCDVCERWYHGKCVKITPAKAESIKQYKCPSCSSKRPRQ</sequence>